<dbReference type="EC" id="4.1.1.23" evidence="1"/>
<dbReference type="EMBL" id="AE015929">
    <property type="protein sequence ID" value="AAO04477.1"/>
    <property type="status" value="ALT_INIT"/>
    <property type="molecule type" value="Genomic_DNA"/>
</dbReference>
<dbReference type="RefSeq" id="NP_764435.1">
    <property type="nucleotide sequence ID" value="NC_004461.1"/>
</dbReference>
<dbReference type="RefSeq" id="WP_001830092.1">
    <property type="nucleotide sequence ID" value="NZ_WBME01000063.1"/>
</dbReference>
<dbReference type="SMR" id="Q8CPJ3"/>
<dbReference type="KEGG" id="sep:SE_0880"/>
<dbReference type="PATRIC" id="fig|176280.10.peg.852"/>
<dbReference type="eggNOG" id="COG0284">
    <property type="taxonomic scope" value="Bacteria"/>
</dbReference>
<dbReference type="HOGENOM" id="CLU_067069_1_1_9"/>
<dbReference type="OrthoDB" id="9806203at2"/>
<dbReference type="UniPathway" id="UPA00070">
    <property type="reaction ID" value="UER00120"/>
</dbReference>
<dbReference type="Proteomes" id="UP000001411">
    <property type="component" value="Chromosome"/>
</dbReference>
<dbReference type="GO" id="GO:0005829">
    <property type="term" value="C:cytosol"/>
    <property type="evidence" value="ECO:0007669"/>
    <property type="project" value="TreeGrafter"/>
</dbReference>
<dbReference type="GO" id="GO:0004590">
    <property type="term" value="F:orotidine-5'-phosphate decarboxylase activity"/>
    <property type="evidence" value="ECO:0007669"/>
    <property type="project" value="UniProtKB-UniRule"/>
</dbReference>
<dbReference type="GO" id="GO:0006207">
    <property type="term" value="P:'de novo' pyrimidine nucleobase biosynthetic process"/>
    <property type="evidence" value="ECO:0007669"/>
    <property type="project" value="InterPro"/>
</dbReference>
<dbReference type="GO" id="GO:0044205">
    <property type="term" value="P:'de novo' UMP biosynthetic process"/>
    <property type="evidence" value="ECO:0007669"/>
    <property type="project" value="UniProtKB-UniRule"/>
</dbReference>
<dbReference type="CDD" id="cd04725">
    <property type="entry name" value="OMP_decarboxylase_like"/>
    <property type="match status" value="1"/>
</dbReference>
<dbReference type="FunFam" id="3.20.20.70:FF:000015">
    <property type="entry name" value="Orotidine 5'-phosphate decarboxylase"/>
    <property type="match status" value="1"/>
</dbReference>
<dbReference type="Gene3D" id="3.20.20.70">
    <property type="entry name" value="Aldolase class I"/>
    <property type="match status" value="1"/>
</dbReference>
<dbReference type="HAMAP" id="MF_01200_B">
    <property type="entry name" value="OMPdecase_type1_B"/>
    <property type="match status" value="1"/>
</dbReference>
<dbReference type="InterPro" id="IPR013785">
    <property type="entry name" value="Aldolase_TIM"/>
</dbReference>
<dbReference type="InterPro" id="IPR014732">
    <property type="entry name" value="OMPdecase"/>
</dbReference>
<dbReference type="InterPro" id="IPR018089">
    <property type="entry name" value="OMPdecase_AS"/>
</dbReference>
<dbReference type="InterPro" id="IPR047596">
    <property type="entry name" value="OMPdecase_bac"/>
</dbReference>
<dbReference type="InterPro" id="IPR001754">
    <property type="entry name" value="OMPdeCOase_dom"/>
</dbReference>
<dbReference type="InterPro" id="IPR011060">
    <property type="entry name" value="RibuloseP-bd_barrel"/>
</dbReference>
<dbReference type="NCBIfam" id="NF001273">
    <property type="entry name" value="PRK00230.1"/>
    <property type="match status" value="1"/>
</dbReference>
<dbReference type="NCBIfam" id="TIGR01740">
    <property type="entry name" value="pyrF"/>
    <property type="match status" value="1"/>
</dbReference>
<dbReference type="PANTHER" id="PTHR32119">
    <property type="entry name" value="OROTIDINE 5'-PHOSPHATE DECARBOXYLASE"/>
    <property type="match status" value="1"/>
</dbReference>
<dbReference type="PANTHER" id="PTHR32119:SF2">
    <property type="entry name" value="OROTIDINE 5'-PHOSPHATE DECARBOXYLASE"/>
    <property type="match status" value="1"/>
</dbReference>
<dbReference type="Pfam" id="PF00215">
    <property type="entry name" value="OMPdecase"/>
    <property type="match status" value="1"/>
</dbReference>
<dbReference type="SMART" id="SM00934">
    <property type="entry name" value="OMPdecase"/>
    <property type="match status" value="1"/>
</dbReference>
<dbReference type="SUPFAM" id="SSF51366">
    <property type="entry name" value="Ribulose-phoshate binding barrel"/>
    <property type="match status" value="1"/>
</dbReference>
<dbReference type="PROSITE" id="PS00156">
    <property type="entry name" value="OMPDECASE"/>
    <property type="match status" value="1"/>
</dbReference>
<comment type="function">
    <text evidence="1">Catalyzes the decarboxylation of orotidine 5'-monophosphate (OMP) to uridine 5'-monophosphate (UMP).</text>
</comment>
<comment type="catalytic activity">
    <reaction evidence="1">
        <text>orotidine 5'-phosphate + H(+) = UMP + CO2</text>
        <dbReference type="Rhea" id="RHEA:11596"/>
        <dbReference type="ChEBI" id="CHEBI:15378"/>
        <dbReference type="ChEBI" id="CHEBI:16526"/>
        <dbReference type="ChEBI" id="CHEBI:57538"/>
        <dbReference type="ChEBI" id="CHEBI:57865"/>
        <dbReference type="EC" id="4.1.1.23"/>
    </reaction>
</comment>
<comment type="pathway">
    <text evidence="1">Pyrimidine metabolism; UMP biosynthesis via de novo pathway; UMP from orotate: step 2/2.</text>
</comment>
<comment type="subunit">
    <text evidence="1">Homodimer.</text>
</comment>
<comment type="similarity">
    <text evidence="1">Belongs to the OMP decarboxylase family. Type 1 subfamily.</text>
</comment>
<comment type="sequence caution" evidence="2">
    <conflict type="erroneous initiation">
        <sequence resource="EMBL-CDS" id="AAO04477"/>
    </conflict>
</comment>
<protein>
    <recommendedName>
        <fullName evidence="1">Orotidine 5'-phosphate decarboxylase</fullName>
        <ecNumber evidence="1">4.1.1.23</ecNumber>
    </recommendedName>
    <alternativeName>
        <fullName evidence="1">OMP decarboxylase</fullName>
        <shortName evidence="1">OMPDCase</shortName>
        <shortName evidence="1">OMPdecase</shortName>
    </alternativeName>
</protein>
<accession>Q8CPJ3</accession>
<sequence length="230" mass="25556">MRNLPIIALDFKSADEVHTFLNKFNEPLCVKIGMELFYQTGPALIKSIKKRGHDIFLDLKLHDIPNTVSKAMEGLARLDVDLVNVHAAGGIKMMEEAKKGLRKHNADIKIIAVTQLTSTTETQLHEEQNIQTSIEEAVLNYARLTKKAGLDGVVCSPLEAEMISKELGTDFLKVTPGIRPKGAARNDQQRITTPEEAKTLGSTHIVVGRPITQSEHPIDSYHKIKESWLS</sequence>
<gene>
    <name evidence="1" type="primary">pyrF</name>
    <name type="ordered locus">SE_0880</name>
</gene>
<proteinExistence type="inferred from homology"/>
<reference key="1">
    <citation type="journal article" date="2003" name="Mol. Microbiol.">
        <title>Genome-based analysis of virulence genes in a non-biofilm-forming Staphylococcus epidermidis strain (ATCC 12228).</title>
        <authorList>
            <person name="Zhang Y.-Q."/>
            <person name="Ren S.-X."/>
            <person name="Li H.-L."/>
            <person name="Wang Y.-X."/>
            <person name="Fu G."/>
            <person name="Yang J."/>
            <person name="Qin Z.-Q."/>
            <person name="Miao Y.-G."/>
            <person name="Wang W.-Y."/>
            <person name="Chen R.-S."/>
            <person name="Shen Y."/>
            <person name="Chen Z."/>
            <person name="Yuan Z.-H."/>
            <person name="Zhao G.-P."/>
            <person name="Qu D."/>
            <person name="Danchin A."/>
            <person name="Wen Y.-M."/>
        </authorList>
    </citation>
    <scope>NUCLEOTIDE SEQUENCE [LARGE SCALE GENOMIC DNA]</scope>
    <source>
        <strain>ATCC 12228 / FDA PCI 1200</strain>
    </source>
</reference>
<keyword id="KW-0210">Decarboxylase</keyword>
<keyword id="KW-0456">Lyase</keyword>
<keyword id="KW-0665">Pyrimidine biosynthesis</keyword>
<feature type="chain" id="PRO_0000134580" description="Orotidine 5'-phosphate decarboxylase">
    <location>
        <begin position="1"/>
        <end position="230"/>
    </location>
</feature>
<feature type="active site" description="Proton donor" evidence="1">
    <location>
        <position position="60"/>
    </location>
</feature>
<feature type="binding site" evidence="1">
    <location>
        <position position="10"/>
    </location>
    <ligand>
        <name>substrate</name>
    </ligand>
</feature>
<feature type="binding site" evidence="1">
    <location>
        <position position="31"/>
    </location>
    <ligand>
        <name>substrate</name>
    </ligand>
</feature>
<feature type="binding site" evidence="1">
    <location>
        <begin position="58"/>
        <end position="67"/>
    </location>
    <ligand>
        <name>substrate</name>
    </ligand>
</feature>
<feature type="binding site" evidence="1">
    <location>
        <position position="117"/>
    </location>
    <ligand>
        <name>substrate</name>
    </ligand>
</feature>
<feature type="binding site" evidence="1">
    <location>
        <position position="179"/>
    </location>
    <ligand>
        <name>substrate</name>
    </ligand>
</feature>
<feature type="binding site" evidence="1">
    <location>
        <position position="188"/>
    </location>
    <ligand>
        <name>substrate</name>
    </ligand>
</feature>
<feature type="binding site" evidence="1">
    <location>
        <position position="208"/>
    </location>
    <ligand>
        <name>substrate</name>
    </ligand>
</feature>
<feature type="binding site" evidence="1">
    <location>
        <position position="209"/>
    </location>
    <ligand>
        <name>substrate</name>
    </ligand>
</feature>
<organism>
    <name type="scientific">Staphylococcus epidermidis (strain ATCC 12228 / FDA PCI 1200)</name>
    <dbReference type="NCBI Taxonomy" id="176280"/>
    <lineage>
        <taxon>Bacteria</taxon>
        <taxon>Bacillati</taxon>
        <taxon>Bacillota</taxon>
        <taxon>Bacilli</taxon>
        <taxon>Bacillales</taxon>
        <taxon>Staphylococcaceae</taxon>
        <taxon>Staphylococcus</taxon>
    </lineage>
</organism>
<evidence type="ECO:0000255" key="1">
    <source>
        <dbReference type="HAMAP-Rule" id="MF_01200"/>
    </source>
</evidence>
<evidence type="ECO:0000305" key="2"/>
<name>PYRF_STAES</name>